<proteinExistence type="inferred from homology"/>
<reference key="1">
    <citation type="journal article" date="2000" name="Science">
        <title>Complete genome sequence of Neisseria meningitidis serogroup B strain MC58.</title>
        <authorList>
            <person name="Tettelin H."/>
            <person name="Saunders N.J."/>
            <person name="Heidelberg J.F."/>
            <person name="Jeffries A.C."/>
            <person name="Nelson K.E."/>
            <person name="Eisen J.A."/>
            <person name="Ketchum K.A."/>
            <person name="Hood D.W."/>
            <person name="Peden J.F."/>
            <person name="Dodson R.J."/>
            <person name="Nelson W.C."/>
            <person name="Gwinn M.L."/>
            <person name="DeBoy R.T."/>
            <person name="Peterson J.D."/>
            <person name="Hickey E.K."/>
            <person name="Haft D.H."/>
            <person name="Salzberg S.L."/>
            <person name="White O."/>
            <person name="Fleischmann R.D."/>
            <person name="Dougherty B.A."/>
            <person name="Mason T.M."/>
            <person name="Ciecko A."/>
            <person name="Parksey D.S."/>
            <person name="Blair E."/>
            <person name="Cittone H."/>
            <person name="Clark E.B."/>
            <person name="Cotton M.D."/>
            <person name="Utterback T.R."/>
            <person name="Khouri H.M."/>
            <person name="Qin H."/>
            <person name="Vamathevan J.J."/>
            <person name="Gill J."/>
            <person name="Scarlato V."/>
            <person name="Masignani V."/>
            <person name="Pizza M."/>
            <person name="Grandi G."/>
            <person name="Sun L."/>
            <person name="Smith H.O."/>
            <person name="Fraser C.M."/>
            <person name="Moxon E.R."/>
            <person name="Rappuoli R."/>
            <person name="Venter J.C."/>
        </authorList>
    </citation>
    <scope>NUCLEOTIDE SEQUENCE [LARGE SCALE GENOMIC DNA]</scope>
    <source>
        <strain>ATCC BAA-335 / MC58</strain>
    </source>
</reference>
<evidence type="ECO:0000255" key="1">
    <source>
        <dbReference type="HAMAP-Rule" id="MF_00134"/>
    </source>
</evidence>
<sequence>MTDILNKILATKAQEVAAQKAAVNAEHIRTLAAEAAPVRSFIDSIRGKHRLNLPAVIAEIKKASPSKGLIRPDFRPAEIARAYENAGAACLSVLTDEPYFQGSPEYLKQAREAVSLPVLRKDFIIDEYQVYQARAWGADAVLLIAAALEQEQLERFEAVAHELGMTVLLELHDETELEKCRNLTTPLWGVNNRNLRTFEVSLDQTLSLLPALEGKTVVTESGITGKADVEFMQSRGVHTFLIGETFMRADDIEAEVGKLF</sequence>
<dbReference type="EC" id="4.1.1.48" evidence="1"/>
<dbReference type="EMBL" id="AE002098">
    <property type="protein sequence ID" value="AAF40729.1"/>
    <property type="molecule type" value="Genomic_DNA"/>
</dbReference>
<dbReference type="PIR" id="H81216">
    <property type="entry name" value="H81216"/>
</dbReference>
<dbReference type="RefSeq" id="NP_273331.1">
    <property type="nucleotide sequence ID" value="NC_003112.2"/>
</dbReference>
<dbReference type="RefSeq" id="WP_002221930.1">
    <property type="nucleotide sequence ID" value="NC_003112.2"/>
</dbReference>
<dbReference type="SMR" id="Q9K192"/>
<dbReference type="FunCoup" id="Q9K192">
    <property type="interactions" value="331"/>
</dbReference>
<dbReference type="STRING" id="122586.NMB0275"/>
<dbReference type="PaxDb" id="122586-NMB0275"/>
<dbReference type="KEGG" id="nme:NMB0275"/>
<dbReference type="PATRIC" id="fig|122586.8.peg.342"/>
<dbReference type="HOGENOM" id="CLU_034247_2_0_4"/>
<dbReference type="InParanoid" id="Q9K192"/>
<dbReference type="OrthoDB" id="9804217at2"/>
<dbReference type="UniPathway" id="UPA00035">
    <property type="reaction ID" value="UER00043"/>
</dbReference>
<dbReference type="Proteomes" id="UP000000425">
    <property type="component" value="Chromosome"/>
</dbReference>
<dbReference type="GO" id="GO:0004425">
    <property type="term" value="F:indole-3-glycerol-phosphate synthase activity"/>
    <property type="evidence" value="ECO:0000318"/>
    <property type="project" value="GO_Central"/>
</dbReference>
<dbReference type="GO" id="GO:0004640">
    <property type="term" value="F:phosphoribosylanthranilate isomerase activity"/>
    <property type="evidence" value="ECO:0000318"/>
    <property type="project" value="GO_Central"/>
</dbReference>
<dbReference type="GO" id="GO:0000162">
    <property type="term" value="P:L-tryptophan biosynthetic process"/>
    <property type="evidence" value="ECO:0000318"/>
    <property type="project" value="GO_Central"/>
</dbReference>
<dbReference type="CDD" id="cd00331">
    <property type="entry name" value="IGPS"/>
    <property type="match status" value="1"/>
</dbReference>
<dbReference type="FunFam" id="3.20.20.70:FF:000024">
    <property type="entry name" value="Indole-3-glycerol phosphate synthase"/>
    <property type="match status" value="1"/>
</dbReference>
<dbReference type="Gene3D" id="3.20.20.70">
    <property type="entry name" value="Aldolase class I"/>
    <property type="match status" value="1"/>
</dbReference>
<dbReference type="HAMAP" id="MF_00134_B">
    <property type="entry name" value="IGPS_B"/>
    <property type="match status" value="1"/>
</dbReference>
<dbReference type="InterPro" id="IPR013785">
    <property type="entry name" value="Aldolase_TIM"/>
</dbReference>
<dbReference type="InterPro" id="IPR045186">
    <property type="entry name" value="Indole-3-glycerol_P_synth"/>
</dbReference>
<dbReference type="InterPro" id="IPR013798">
    <property type="entry name" value="Indole-3-glycerol_P_synth_dom"/>
</dbReference>
<dbReference type="InterPro" id="IPR001468">
    <property type="entry name" value="Indole-3-GlycerolPSynthase_CS"/>
</dbReference>
<dbReference type="InterPro" id="IPR011060">
    <property type="entry name" value="RibuloseP-bd_barrel"/>
</dbReference>
<dbReference type="NCBIfam" id="NF001373">
    <property type="entry name" value="PRK00278.1-6"/>
    <property type="match status" value="1"/>
</dbReference>
<dbReference type="NCBIfam" id="NF001377">
    <property type="entry name" value="PRK00278.2-4"/>
    <property type="match status" value="1"/>
</dbReference>
<dbReference type="PANTHER" id="PTHR22854:SF2">
    <property type="entry name" value="INDOLE-3-GLYCEROL-PHOSPHATE SYNTHASE"/>
    <property type="match status" value="1"/>
</dbReference>
<dbReference type="PANTHER" id="PTHR22854">
    <property type="entry name" value="TRYPTOPHAN BIOSYNTHESIS PROTEIN"/>
    <property type="match status" value="1"/>
</dbReference>
<dbReference type="Pfam" id="PF00218">
    <property type="entry name" value="IGPS"/>
    <property type="match status" value="1"/>
</dbReference>
<dbReference type="SUPFAM" id="SSF51366">
    <property type="entry name" value="Ribulose-phoshate binding barrel"/>
    <property type="match status" value="1"/>
</dbReference>
<dbReference type="PROSITE" id="PS00614">
    <property type="entry name" value="IGPS"/>
    <property type="match status" value="1"/>
</dbReference>
<comment type="catalytic activity">
    <reaction evidence="1">
        <text>1-(2-carboxyphenylamino)-1-deoxy-D-ribulose 5-phosphate + H(+) = (1S,2R)-1-C-(indol-3-yl)glycerol 3-phosphate + CO2 + H2O</text>
        <dbReference type="Rhea" id="RHEA:23476"/>
        <dbReference type="ChEBI" id="CHEBI:15377"/>
        <dbReference type="ChEBI" id="CHEBI:15378"/>
        <dbReference type="ChEBI" id="CHEBI:16526"/>
        <dbReference type="ChEBI" id="CHEBI:58613"/>
        <dbReference type="ChEBI" id="CHEBI:58866"/>
        <dbReference type="EC" id="4.1.1.48"/>
    </reaction>
</comment>
<comment type="pathway">
    <text evidence="1">Amino-acid biosynthesis; L-tryptophan biosynthesis; L-tryptophan from chorismate: step 4/5.</text>
</comment>
<comment type="similarity">
    <text evidence="1">Belongs to the TrpC family.</text>
</comment>
<gene>
    <name evidence="1" type="primary">trpC</name>
    <name type="ordered locus">NMB0275</name>
</gene>
<accession>Q9K192</accession>
<keyword id="KW-0028">Amino-acid biosynthesis</keyword>
<keyword id="KW-0057">Aromatic amino acid biosynthesis</keyword>
<keyword id="KW-0210">Decarboxylase</keyword>
<keyword id="KW-0456">Lyase</keyword>
<keyword id="KW-1185">Reference proteome</keyword>
<keyword id="KW-0822">Tryptophan biosynthesis</keyword>
<feature type="chain" id="PRO_0000154237" description="Indole-3-glycerol phosphate synthase">
    <location>
        <begin position="1"/>
        <end position="260"/>
    </location>
</feature>
<organism>
    <name type="scientific">Neisseria meningitidis serogroup B (strain ATCC BAA-335 / MC58)</name>
    <dbReference type="NCBI Taxonomy" id="122586"/>
    <lineage>
        <taxon>Bacteria</taxon>
        <taxon>Pseudomonadati</taxon>
        <taxon>Pseudomonadota</taxon>
        <taxon>Betaproteobacteria</taxon>
        <taxon>Neisseriales</taxon>
        <taxon>Neisseriaceae</taxon>
        <taxon>Neisseria</taxon>
    </lineage>
</organism>
<name>TRPC_NEIMB</name>
<protein>
    <recommendedName>
        <fullName evidence="1">Indole-3-glycerol phosphate synthase</fullName>
        <shortName evidence="1">IGPS</shortName>
        <ecNumber evidence="1">4.1.1.48</ecNumber>
    </recommendedName>
</protein>